<dbReference type="EMBL" id="X94552">
    <property type="protein sequence ID" value="CAA64245.1"/>
    <property type="molecule type" value="mRNA"/>
</dbReference>
<dbReference type="EMBL" id="U92458">
    <property type="protein sequence ID" value="AAB51763.1"/>
    <property type="molecule type" value="mRNA"/>
</dbReference>
<dbReference type="EMBL" id="AF458052">
    <property type="protein sequence ID" value="AAM47557.1"/>
    <property type="status" value="ALT_FRAME"/>
    <property type="molecule type" value="mRNA"/>
</dbReference>
<dbReference type="EMBL" id="AF458053">
    <property type="protein sequence ID" value="AAM47558.1"/>
    <property type="molecule type" value="mRNA"/>
</dbReference>
<dbReference type="EMBL" id="AF458054">
    <property type="protein sequence ID" value="AAM47559.1"/>
    <property type="molecule type" value="mRNA"/>
</dbReference>
<dbReference type="CCDS" id="CCDS43042.1">
    <molecule id="Q14831-1"/>
</dbReference>
<dbReference type="RefSeq" id="NP_000835.1">
    <molecule id="Q14831-1"/>
    <property type="nucleotide sequence ID" value="NM_000844.4"/>
</dbReference>
<dbReference type="RefSeq" id="NP_870989.1">
    <molecule id="Q14831-2"/>
    <property type="nucleotide sequence ID" value="NM_181874.3"/>
</dbReference>
<dbReference type="RefSeq" id="XP_047304008.1">
    <molecule id="Q14831-2"/>
    <property type="nucleotide sequence ID" value="XM_047448052.1"/>
</dbReference>
<dbReference type="PDB" id="3MQ4">
    <property type="method" value="X-ray"/>
    <property type="resolution" value="2.80 A"/>
    <property type="chains" value="A=37-513"/>
</dbReference>
<dbReference type="PDB" id="5C5C">
    <property type="method" value="X-ray"/>
    <property type="resolution" value="1.86 A"/>
    <property type="chains" value="A=37-513"/>
</dbReference>
<dbReference type="PDB" id="7EPC">
    <property type="method" value="EM"/>
    <property type="resolution" value="4.00 A"/>
    <property type="chains" value="A/B=35-859"/>
</dbReference>
<dbReference type="PDB" id="7EPD">
    <property type="method" value="EM"/>
    <property type="resolution" value="3.90 A"/>
    <property type="chains" value="B=15-859"/>
</dbReference>
<dbReference type="PDBsum" id="3MQ4"/>
<dbReference type="PDBsum" id="5C5C"/>
<dbReference type="PDBsum" id="7EPC"/>
<dbReference type="PDBsum" id="7EPD"/>
<dbReference type="EMDB" id="EMD-31238"/>
<dbReference type="SMR" id="Q14831"/>
<dbReference type="BioGRID" id="109174">
    <property type="interactions" value="8"/>
</dbReference>
<dbReference type="CORUM" id="Q14831"/>
<dbReference type="FunCoup" id="Q14831">
    <property type="interactions" value="715"/>
</dbReference>
<dbReference type="IntAct" id="Q14831">
    <property type="interactions" value="1"/>
</dbReference>
<dbReference type="STRING" id="9606.ENSP00000350348"/>
<dbReference type="BindingDB" id="Q14831"/>
<dbReference type="ChEMBL" id="CHEMBL3777"/>
<dbReference type="DrugBank" id="DB00142">
    <property type="generic name" value="Glutamic acid"/>
</dbReference>
<dbReference type="DrugCentral" id="Q14831"/>
<dbReference type="GuidetoPHARMACOLOGY" id="295"/>
<dbReference type="GlyCosmos" id="Q14831">
    <property type="glycosylation" value="4 sites, No reported glycans"/>
</dbReference>
<dbReference type="GlyGen" id="Q14831">
    <property type="glycosylation" value="5 sites, 1 O-linked glycan (1 site)"/>
</dbReference>
<dbReference type="iPTMnet" id="Q14831"/>
<dbReference type="PhosphoSitePlus" id="Q14831"/>
<dbReference type="BioMuta" id="GRM7"/>
<dbReference type="DMDM" id="2495078"/>
<dbReference type="jPOST" id="Q14831"/>
<dbReference type="MassIVE" id="Q14831"/>
<dbReference type="PaxDb" id="9606-ENSP00000350348"/>
<dbReference type="PeptideAtlas" id="Q14831"/>
<dbReference type="ProteomicsDB" id="60197">
    <molecule id="Q14831-1"/>
</dbReference>
<dbReference type="ProteomicsDB" id="60198">
    <molecule id="Q14831-2"/>
</dbReference>
<dbReference type="ProteomicsDB" id="60199">
    <molecule id="Q14831-3"/>
</dbReference>
<dbReference type="ProteomicsDB" id="60200">
    <molecule id="Q14831-4"/>
</dbReference>
<dbReference type="ProteomicsDB" id="60201">
    <molecule id="Q14831-5"/>
</dbReference>
<dbReference type="Antibodypedia" id="10079">
    <property type="antibodies" value="416 antibodies from 34 providers"/>
</dbReference>
<dbReference type="DNASU" id="2917"/>
<dbReference type="Ensembl" id="ENST00000357716.9">
    <molecule id="Q14831-1"/>
    <property type="protein sequence ID" value="ENSP00000350348.4"/>
    <property type="gene ID" value="ENSG00000196277.17"/>
</dbReference>
<dbReference type="Ensembl" id="ENST00000389335.7">
    <molecule id="Q14831-4"/>
    <property type="protein sequence ID" value="ENSP00000373986.3"/>
    <property type="gene ID" value="ENSG00000196277.17"/>
</dbReference>
<dbReference type="Ensembl" id="ENST00000389336.8">
    <molecule id="Q14831-5"/>
    <property type="protein sequence ID" value="ENSP00000373987.4"/>
    <property type="gene ID" value="ENSG00000196277.17"/>
</dbReference>
<dbReference type="Ensembl" id="ENST00000467425.5">
    <molecule id="Q14831-2"/>
    <property type="protein sequence ID" value="ENSP00000419835.1"/>
    <property type="gene ID" value="ENSG00000196277.17"/>
</dbReference>
<dbReference type="Ensembl" id="ENST00000486284.5">
    <molecule id="Q14831-2"/>
    <property type="protein sequence ID" value="ENSP00000417536.1"/>
    <property type="gene ID" value="ENSG00000196277.17"/>
</dbReference>
<dbReference type="GeneID" id="2917"/>
<dbReference type="KEGG" id="hsa:2917"/>
<dbReference type="MANE-Select" id="ENST00000357716.9">
    <property type="protein sequence ID" value="ENSP00000350348.4"/>
    <property type="RefSeq nucleotide sequence ID" value="NM_000844.4"/>
    <property type="RefSeq protein sequence ID" value="NP_000835.1"/>
</dbReference>
<dbReference type="UCSC" id="uc003bql.3">
    <molecule id="Q14831-1"/>
    <property type="organism name" value="human"/>
</dbReference>
<dbReference type="AGR" id="HGNC:4599"/>
<dbReference type="CTD" id="2917"/>
<dbReference type="DisGeNET" id="2917"/>
<dbReference type="GeneCards" id="GRM7"/>
<dbReference type="HGNC" id="HGNC:4599">
    <property type="gene designation" value="GRM7"/>
</dbReference>
<dbReference type="HPA" id="ENSG00000196277">
    <property type="expression patterns" value="Tissue enhanced (brain, parathyroid gland)"/>
</dbReference>
<dbReference type="MalaCards" id="GRM7"/>
<dbReference type="MIM" id="604101">
    <property type="type" value="gene"/>
</dbReference>
<dbReference type="MIM" id="618922">
    <property type="type" value="phenotype"/>
</dbReference>
<dbReference type="neXtProt" id="NX_Q14831"/>
<dbReference type="OpenTargets" id="ENSG00000196277"/>
<dbReference type="Orphanet" id="88616">
    <property type="disease" value="Autosomal recessive non-syndromic intellectual disability"/>
</dbReference>
<dbReference type="Orphanet" id="1934">
    <property type="disease" value="Early infantile developmental and epileptic encephalopathy"/>
</dbReference>
<dbReference type="PharmGKB" id="PA28996"/>
<dbReference type="VEuPathDB" id="HostDB:ENSG00000196277"/>
<dbReference type="eggNOG" id="KOG1056">
    <property type="taxonomic scope" value="Eukaryota"/>
</dbReference>
<dbReference type="GeneTree" id="ENSGT01030000234648"/>
<dbReference type="HOGENOM" id="CLU_005389_0_0_1"/>
<dbReference type="InParanoid" id="Q14831"/>
<dbReference type="OMA" id="EDMQWGR"/>
<dbReference type="OrthoDB" id="425344at2759"/>
<dbReference type="PAN-GO" id="Q14831">
    <property type="GO annotations" value="4 GO annotations based on evolutionary models"/>
</dbReference>
<dbReference type="PhylomeDB" id="Q14831"/>
<dbReference type="TreeFam" id="TF313240"/>
<dbReference type="PathwayCommons" id="Q14831"/>
<dbReference type="Reactome" id="R-HSA-418594">
    <property type="pathway name" value="G alpha (i) signalling events"/>
</dbReference>
<dbReference type="Reactome" id="R-HSA-420499">
    <property type="pathway name" value="Class C/3 (Metabotropic glutamate/pheromone receptors)"/>
</dbReference>
<dbReference type="SignaLink" id="Q14831"/>
<dbReference type="SIGNOR" id="Q14831"/>
<dbReference type="BioGRID-ORCS" id="2917">
    <property type="hits" value="15 hits in 1151 CRISPR screens"/>
</dbReference>
<dbReference type="ChiTaRS" id="GRM7">
    <property type="organism name" value="human"/>
</dbReference>
<dbReference type="EvolutionaryTrace" id="Q14831"/>
<dbReference type="GeneWiki" id="Metabotropic_glutamate_receptor_7"/>
<dbReference type="GenomeRNAi" id="2917"/>
<dbReference type="Pharos" id="Q14831">
    <property type="development level" value="Tchem"/>
</dbReference>
<dbReference type="PRO" id="PR:Q14831"/>
<dbReference type="Proteomes" id="UP000005640">
    <property type="component" value="Chromosome 3"/>
</dbReference>
<dbReference type="RNAct" id="Q14831">
    <property type="molecule type" value="protein"/>
</dbReference>
<dbReference type="Bgee" id="ENSG00000196277">
    <property type="expression patterns" value="Expressed in endothelial cell and 122 other cell types or tissues"/>
</dbReference>
<dbReference type="ExpressionAtlas" id="Q14831">
    <property type="expression patterns" value="baseline and differential"/>
</dbReference>
<dbReference type="GO" id="GO:0032279">
    <property type="term" value="C:asymmetric synapse"/>
    <property type="evidence" value="ECO:0000250"/>
    <property type="project" value="UniProtKB"/>
</dbReference>
<dbReference type="GO" id="GO:0030424">
    <property type="term" value="C:axon"/>
    <property type="evidence" value="ECO:0000250"/>
    <property type="project" value="UniProtKB"/>
</dbReference>
<dbReference type="GO" id="GO:0005938">
    <property type="term" value="C:cell cortex"/>
    <property type="evidence" value="ECO:0000314"/>
    <property type="project" value="UniProtKB"/>
</dbReference>
<dbReference type="GO" id="GO:0030425">
    <property type="term" value="C:dendrite"/>
    <property type="evidence" value="ECO:0000314"/>
    <property type="project" value="UniProtKB"/>
</dbReference>
<dbReference type="GO" id="GO:0043198">
    <property type="term" value="C:dendritic shaft"/>
    <property type="evidence" value="ECO:0000250"/>
    <property type="project" value="UniProtKB"/>
</dbReference>
<dbReference type="GO" id="GO:0016020">
    <property type="term" value="C:membrane"/>
    <property type="evidence" value="ECO:0000314"/>
    <property type="project" value="UniProtKB"/>
</dbReference>
<dbReference type="GO" id="GO:0005886">
    <property type="term" value="C:plasma membrane"/>
    <property type="evidence" value="ECO:0000315"/>
    <property type="project" value="UniProtKB"/>
</dbReference>
<dbReference type="GO" id="GO:0045211">
    <property type="term" value="C:postsynaptic membrane"/>
    <property type="evidence" value="ECO:0000250"/>
    <property type="project" value="UniProtKB"/>
</dbReference>
<dbReference type="GO" id="GO:0048786">
    <property type="term" value="C:presynaptic active zone"/>
    <property type="evidence" value="ECO:0000250"/>
    <property type="project" value="UniProtKB"/>
</dbReference>
<dbReference type="GO" id="GO:0043235">
    <property type="term" value="C:receptor complex"/>
    <property type="evidence" value="ECO:0000314"/>
    <property type="project" value="MGI"/>
</dbReference>
<dbReference type="GO" id="GO:0010855">
    <property type="term" value="F:adenylate cyclase inhibitor activity"/>
    <property type="evidence" value="ECO:0000314"/>
    <property type="project" value="UniProtKB"/>
</dbReference>
<dbReference type="GO" id="GO:0005509">
    <property type="term" value="F:calcium ion binding"/>
    <property type="evidence" value="ECO:0000314"/>
    <property type="project" value="UniProtKB"/>
</dbReference>
<dbReference type="GO" id="GO:0016595">
    <property type="term" value="F:glutamate binding"/>
    <property type="evidence" value="ECO:0000314"/>
    <property type="project" value="UniProtKB"/>
</dbReference>
<dbReference type="GO" id="GO:0008066">
    <property type="term" value="F:glutamate receptor activity"/>
    <property type="evidence" value="ECO:0000314"/>
    <property type="project" value="UniProtKB"/>
</dbReference>
<dbReference type="GO" id="GO:0001642">
    <property type="term" value="F:group III metabotropic glutamate receptor activity"/>
    <property type="evidence" value="ECO:0000314"/>
    <property type="project" value="UniProtKB"/>
</dbReference>
<dbReference type="GO" id="GO:0030165">
    <property type="term" value="F:PDZ domain binding"/>
    <property type="evidence" value="ECO:0000303"/>
    <property type="project" value="UniProtKB"/>
</dbReference>
<dbReference type="GO" id="GO:0046983">
    <property type="term" value="F:protein dimerization activity"/>
    <property type="evidence" value="ECO:0000315"/>
    <property type="project" value="UniProtKB"/>
</dbReference>
<dbReference type="GO" id="GO:0070905">
    <property type="term" value="F:serine binding"/>
    <property type="evidence" value="ECO:0000314"/>
    <property type="project" value="UniProtKB"/>
</dbReference>
<dbReference type="GO" id="GO:0007196">
    <property type="term" value="P:adenylate cyclase-inhibiting G protein-coupled glutamate receptor signaling pathway"/>
    <property type="evidence" value="ECO:0000314"/>
    <property type="project" value="UniProtKB"/>
</dbReference>
<dbReference type="GO" id="GO:0007193">
    <property type="term" value="P:adenylate cyclase-inhibiting G protein-coupled receptor signaling pathway"/>
    <property type="evidence" value="ECO:0000314"/>
    <property type="project" value="UniProtKB"/>
</dbReference>
<dbReference type="GO" id="GO:0061564">
    <property type="term" value="P:axon development"/>
    <property type="evidence" value="ECO:0000315"/>
    <property type="project" value="UniProtKB"/>
</dbReference>
<dbReference type="GO" id="GO:0007268">
    <property type="term" value="P:chemical synaptic transmission"/>
    <property type="evidence" value="ECO:0000314"/>
    <property type="project" value="UniProtKB"/>
</dbReference>
<dbReference type="GO" id="GO:0007216">
    <property type="term" value="P:G protein-coupled glutamate receptor signaling pathway"/>
    <property type="evidence" value="ECO:0000318"/>
    <property type="project" value="GO_Central"/>
</dbReference>
<dbReference type="GO" id="GO:0070085">
    <property type="term" value="P:glycosylation"/>
    <property type="evidence" value="ECO:0000314"/>
    <property type="project" value="UniProtKB"/>
</dbReference>
<dbReference type="GO" id="GO:0014050">
    <property type="term" value="P:negative regulation of glutamate secretion"/>
    <property type="evidence" value="ECO:0000250"/>
    <property type="project" value="UniProtKB"/>
</dbReference>
<dbReference type="GO" id="GO:0051966">
    <property type="term" value="P:regulation of synaptic transmission, glutamatergic"/>
    <property type="evidence" value="ECO:0000318"/>
    <property type="project" value="GO_Central"/>
</dbReference>
<dbReference type="GO" id="GO:0007605">
    <property type="term" value="P:sensory perception of sound"/>
    <property type="evidence" value="ECO:0000315"/>
    <property type="project" value="UniProtKB"/>
</dbReference>
<dbReference type="CDD" id="cd15451">
    <property type="entry name" value="7tmC_mGluR7"/>
    <property type="match status" value="1"/>
</dbReference>
<dbReference type="CDD" id="cd06376">
    <property type="entry name" value="PBP1_mGluR_groupIII"/>
    <property type="match status" value="1"/>
</dbReference>
<dbReference type="FunFam" id="3.40.50.2300:FF:000196">
    <property type="entry name" value="Glutamate metabotropic receptor 7"/>
    <property type="match status" value="1"/>
</dbReference>
<dbReference type="FunFam" id="3.40.50.2300:FF:000009">
    <property type="entry name" value="Glutamate receptor, metabotropic 4"/>
    <property type="match status" value="1"/>
</dbReference>
<dbReference type="FunFam" id="2.10.50.30:FF:000001">
    <property type="entry name" value="metabotropic glutamate receptor 1"/>
    <property type="match status" value="1"/>
</dbReference>
<dbReference type="FunFam" id="3.40.50.2300:FF:000176">
    <property type="entry name" value="metabotropic glutamate receptor 7"/>
    <property type="match status" value="1"/>
</dbReference>
<dbReference type="Gene3D" id="3.40.50.2300">
    <property type="match status" value="2"/>
</dbReference>
<dbReference type="Gene3D" id="2.10.50.30">
    <property type="entry name" value="GPCR, family 3, nine cysteines domain"/>
    <property type="match status" value="1"/>
</dbReference>
<dbReference type="InterPro" id="IPR001828">
    <property type="entry name" value="ANF_lig-bd_rcpt"/>
</dbReference>
<dbReference type="InterPro" id="IPR000337">
    <property type="entry name" value="GPCR_3"/>
</dbReference>
<dbReference type="InterPro" id="IPR011500">
    <property type="entry name" value="GPCR_3_9-Cys_dom"/>
</dbReference>
<dbReference type="InterPro" id="IPR038550">
    <property type="entry name" value="GPCR_3_9-Cys_sf"/>
</dbReference>
<dbReference type="InterPro" id="IPR017978">
    <property type="entry name" value="GPCR_3_C"/>
</dbReference>
<dbReference type="InterPro" id="IPR017979">
    <property type="entry name" value="GPCR_3_CS"/>
</dbReference>
<dbReference type="InterPro" id="IPR001883">
    <property type="entry name" value="GPCR_3_mGluR7"/>
</dbReference>
<dbReference type="InterPro" id="IPR000162">
    <property type="entry name" value="GPCR_3_mtglu_rcpt"/>
</dbReference>
<dbReference type="InterPro" id="IPR050726">
    <property type="entry name" value="mGluR"/>
</dbReference>
<dbReference type="InterPro" id="IPR028082">
    <property type="entry name" value="Peripla_BP_I"/>
</dbReference>
<dbReference type="PANTHER" id="PTHR24060">
    <property type="entry name" value="METABOTROPIC GLUTAMATE RECEPTOR"/>
    <property type="match status" value="1"/>
</dbReference>
<dbReference type="Pfam" id="PF00003">
    <property type="entry name" value="7tm_3"/>
    <property type="match status" value="1"/>
</dbReference>
<dbReference type="Pfam" id="PF01094">
    <property type="entry name" value="ANF_receptor"/>
    <property type="match status" value="1"/>
</dbReference>
<dbReference type="Pfam" id="PF07562">
    <property type="entry name" value="NCD3G"/>
    <property type="match status" value="1"/>
</dbReference>
<dbReference type="PRINTS" id="PR00248">
    <property type="entry name" value="GPCRMGR"/>
</dbReference>
<dbReference type="PRINTS" id="PR01057">
    <property type="entry name" value="MTABOTROPC7R"/>
</dbReference>
<dbReference type="PRINTS" id="PR00593">
    <property type="entry name" value="MTABOTROPICR"/>
</dbReference>
<dbReference type="SUPFAM" id="SSF53822">
    <property type="entry name" value="Periplasmic binding protein-like I"/>
    <property type="match status" value="1"/>
</dbReference>
<dbReference type="PROSITE" id="PS00979">
    <property type="entry name" value="G_PROTEIN_RECEP_F3_1"/>
    <property type="match status" value="1"/>
</dbReference>
<dbReference type="PROSITE" id="PS00980">
    <property type="entry name" value="G_PROTEIN_RECEP_F3_2"/>
    <property type="match status" value="1"/>
</dbReference>
<dbReference type="PROSITE" id="PS00981">
    <property type="entry name" value="G_PROTEIN_RECEP_F3_3"/>
    <property type="match status" value="1"/>
</dbReference>
<dbReference type="PROSITE" id="PS50259">
    <property type="entry name" value="G_PROTEIN_RECEP_F3_4"/>
    <property type="match status" value="1"/>
</dbReference>
<keyword id="KW-0002">3D-structure</keyword>
<keyword id="KW-0025">Alternative splicing</keyword>
<keyword id="KW-0122">Cardiomyopathy</keyword>
<keyword id="KW-1003">Cell membrane</keyword>
<keyword id="KW-0225">Disease variant</keyword>
<keyword id="KW-1015">Disulfide bond</keyword>
<keyword id="KW-0887">Epilepsy</keyword>
<keyword id="KW-0297">G-protein coupled receptor</keyword>
<keyword id="KW-0325">Glycoprotein</keyword>
<keyword id="KW-0991">Intellectual disability</keyword>
<keyword id="KW-0472">Membrane</keyword>
<keyword id="KW-0597">Phosphoprotein</keyword>
<keyword id="KW-1267">Proteomics identification</keyword>
<keyword id="KW-0675">Receptor</keyword>
<keyword id="KW-1185">Reference proteome</keyword>
<keyword id="KW-0716">Sensory transduction</keyword>
<keyword id="KW-0732">Signal</keyword>
<keyword id="KW-0807">Transducer</keyword>
<keyword id="KW-0812">Transmembrane</keyword>
<keyword id="KW-1133">Transmembrane helix</keyword>
<name>GRM7_HUMAN</name>
<accession>Q14831</accession>
<accession>Q8NFS2</accession>
<accession>Q8NFS3</accession>
<accession>Q8NFS4</accession>
<gene>
    <name type="primary">GRM7</name>
    <name type="synonym">GPRC1G</name>
    <name type="synonym">MGLUR7</name>
</gene>
<organism>
    <name type="scientific">Homo sapiens</name>
    <name type="common">Human</name>
    <dbReference type="NCBI Taxonomy" id="9606"/>
    <lineage>
        <taxon>Eukaryota</taxon>
        <taxon>Metazoa</taxon>
        <taxon>Chordata</taxon>
        <taxon>Craniata</taxon>
        <taxon>Vertebrata</taxon>
        <taxon>Euteleostomi</taxon>
        <taxon>Mammalia</taxon>
        <taxon>Eutheria</taxon>
        <taxon>Euarchontoglires</taxon>
        <taxon>Primates</taxon>
        <taxon>Haplorrhini</taxon>
        <taxon>Catarrhini</taxon>
        <taxon>Hominidae</taxon>
        <taxon>Homo</taxon>
    </lineage>
</organism>
<reference key="1">
    <citation type="journal article" date="1996" name="Brain Res. Mol. Brain Res.">
        <title>Human metabotropic glutamate receptor type 7: molecular cloning and mRNA distribution in the CNS.</title>
        <authorList>
            <person name="Makoff A."/>
            <person name="Pilling C."/>
            <person name="Harrington K."/>
            <person name="Emson P."/>
        </authorList>
    </citation>
    <scope>NUCLEOTIDE SEQUENCE [MRNA] (ISOFORM 1)</scope>
    <scope>TISSUE SPECIFICITY</scope>
    <source>
        <tissue>Brain</tissue>
    </source>
</reference>
<reference key="2">
    <citation type="journal article" date="1997" name="Neuropharmacology">
        <title>A novel splice variant of a metabotropic glutamate receptor, human mGluR7b.</title>
        <authorList>
            <person name="Flor P.J."/>
            <person name="Van Der Putten H."/>
            <person name="Ruegg D."/>
            <person name="Lukic S."/>
            <person name="Leonhardt T."/>
            <person name="Bence M."/>
            <person name="Sansig G."/>
            <person name="Knoepfel T."/>
            <person name="Kuhn R."/>
        </authorList>
    </citation>
    <scope>NUCLEOTIDE SEQUENCE [MRNA] (ISOFORMS 1 AND 2)</scope>
</reference>
<reference key="3">
    <citation type="journal article" date="1998" name="Brain Res. Mol. Brain Res.">
        <title>Group III human metabotropic glutamate receptors 4, 7 and 8: molecular cloning, functional expression, and comparison of pharmacological properties in RGT cells.</title>
        <authorList>
            <person name="Wu S."/>
            <person name="Wright R.A."/>
            <person name="Rockey P.K."/>
            <person name="Burgett S.G."/>
            <person name="Arnold J.S."/>
            <person name="Rosteck P.R. Jr."/>
            <person name="Johnson B.G."/>
            <person name="Schoepp D.D."/>
            <person name="Belagaje R.M."/>
        </authorList>
    </citation>
    <scope>NUCLEOTIDE SEQUENCE [MRNA] (ISOFORM 1)</scope>
    <scope>FUNCTION</scope>
</reference>
<reference key="4">
    <citation type="journal article" date="2002" name="Neurosci. Lett.">
        <title>Characterization of three novel isoforms of the metabotropic glutamate receptor 7 (GRM7).</title>
        <authorList>
            <person name="Schulz H.L."/>
            <person name="Stoehr H."/>
            <person name="Weber B.H.F."/>
        </authorList>
    </citation>
    <scope>NUCLEOTIDE SEQUENCE [MRNA] (ISOFORMS 3; 4 AND 5)</scope>
    <scope>TISSUE SPECIFICITY</scope>
</reference>
<reference key="5">
    <citation type="journal article" date="2016" name="BMC Med. Genomics">
        <title>Exome sequencing in mostly consanguineous Arab families with neurologic disease provides a high potential molecular diagnosis rate.</title>
        <authorList>
            <person name="Charng W.L."/>
            <person name="Karaca E."/>
            <person name="Coban Akdemir Z."/>
            <person name="Gambin T."/>
            <person name="Atik M.M."/>
            <person name="Gu S."/>
            <person name="Posey J.E."/>
            <person name="Jhangiani S.N."/>
            <person name="Muzny D.M."/>
            <person name="Doddapaneni H."/>
            <person name="Hu J."/>
            <person name="Boerwinkle E."/>
            <person name="Gibbs R.A."/>
            <person name="Rosenfeld J.A."/>
            <person name="Cui H."/>
            <person name="Xia F."/>
            <person name="Manickam K."/>
            <person name="Yang Y."/>
            <person name="Faqeih E.A."/>
            <person name="Al Asmari A."/>
            <person name="Saleh M.A."/>
            <person name="El-Hattab A.W."/>
            <person name="Lupski J.R."/>
        </authorList>
    </citation>
    <scope>INVOLVEMENT IN NEDSHBA</scope>
    <scope>VARIANTS NEDSHBA THR-154; TRP-658 AND LYS-675</scope>
</reference>
<reference key="6">
    <citation type="journal article" date="2017" name="JAMA Psychiatry">
        <title>Diagnostic yield and novel candidate genes by exome sequencing in 152 consanguineous families with neurodevelopmental disorders.</title>
        <authorList>
            <person name="Reuter M.S."/>
            <person name="Tawamie H."/>
            <person name="Buchert R."/>
            <person name="Hosny Gebril O."/>
            <person name="Froukh T."/>
            <person name="Thiel C."/>
            <person name="Uebe S."/>
            <person name="Ekici A.B."/>
            <person name="Krumbiegel M."/>
            <person name="Zweier C."/>
            <person name="Hoyer J."/>
            <person name="Eberlein K."/>
            <person name="Bauer J."/>
            <person name="Scheller U."/>
            <person name="Strom T.M."/>
            <person name="Hoffjan S."/>
            <person name="Abdelraouf E.R."/>
            <person name="Meguid N.A."/>
            <person name="Abboud A."/>
            <person name="Al Khateeb M.A."/>
            <person name="Fakher M."/>
            <person name="Hamdan S."/>
            <person name="Ismael A."/>
            <person name="Muhammad S."/>
            <person name="Abdallah E."/>
            <person name="Sticht H."/>
            <person name="Wieczorek D."/>
            <person name="Reis A."/>
            <person name="Abou Jamra R."/>
        </authorList>
    </citation>
    <scope>VARIANTS NEDSHBA 586-TRP--ILE-915 DEL AND 856-VAL--ILE-915 DEL</scope>
</reference>
<reference key="7">
    <citation type="journal article" date="2020" name="Ann. Clin. Transl. Neurol.">
        <title>Biallelic GRM7 variants cause epilepsy, microcephaly, and cerebral atrophy.</title>
        <authorList>
            <person name="Marafi D."/>
            <person name="Mitani T."/>
            <person name="Isikay S."/>
            <person name="Hertecant J."/>
            <person name="Almannai M."/>
            <person name="Manickam K."/>
            <person name="Abou Jamra R."/>
            <person name="El-Hattab A.W."/>
            <person name="Rajah J."/>
            <person name="Fatih J.M."/>
            <person name="Du H."/>
            <person name="Karaca E."/>
            <person name="Bayram Y."/>
            <person name="Punetha J."/>
            <person name="Rosenfeld J.A."/>
            <person name="Jhangiani S.N."/>
            <person name="Boerwinkle E."/>
            <person name="Akdemir Z.C."/>
            <person name="Erdin S."/>
            <person name="Hunter J.V."/>
            <person name="Gibbs R.A."/>
            <person name="Pehlivan D."/>
            <person name="Posey J.E."/>
            <person name="Lupski J.R."/>
        </authorList>
    </citation>
    <scope>VARIANTS NEDSHBA THR-154; 586-TRP--ILE-915 DEL; GLN-658; TRP-658; 659-ARG--ILE-915 DEL; LYS-675 AND LYS-891</scope>
</reference>
<reference key="8">
    <citation type="journal article" date="2021" name="JCI Insight">
        <title>A GRM7 mutation associated with developmental delay reduces mGlu7 expression and produces neurological phenotypes.</title>
        <authorList>
            <person name="Fisher N.M."/>
            <person name="Alhashim A."/>
            <person name="Buch A.B."/>
            <person name="Badivuku H."/>
            <person name="Samman M.M."/>
            <person name="Weiss K.M."/>
            <person name="Cestero G.I."/>
            <person name="Does M.D."/>
            <person name="Rook J.M."/>
            <person name="Lindsley C.W."/>
            <person name="Conn P.J."/>
            <person name="Gogliotti R.G."/>
            <person name="Niswender C.M."/>
        </authorList>
    </citation>
    <scope>VARIANT NEDSHBA THR-154</scope>
    <scope>CHARACTERIZATION OF VARIANT NEDSHBA THR-154</scope>
    <scope>SUBUNIT</scope>
</reference>
<reference key="9">
    <citation type="journal article" date="2021" name="J. Neurosci.">
        <title>Pathogenic GRM7 mutations associated with neurodevelopmental disorders impair axon outgrowth and presynaptic terminal development.</title>
        <authorList>
            <person name="Song J.M."/>
            <person name="Kang M."/>
            <person name="Park D.H."/>
            <person name="Park S."/>
            <person name="Lee S."/>
            <person name="Suh Y.H."/>
        </authorList>
    </citation>
    <scope>CHARACTERIZATION OF VARIANTS NEDSHBA THR-154 AND 586-TRP--ILE-915 DEL</scope>
    <scope>FUNCTION</scope>
    <scope>SUBUNIT</scope>
    <scope>SUBCELLULAR LOCATION</scope>
    <scope>GLYCOSYLATION</scope>
    <scope>MUTAGENESIS OF ARG-622; ARG-658 AND THR-675</scope>
</reference>
<reference key="10">
    <citation type="submission" date="2010-06" db="PDB data bank">
        <title>MGluR7 complexed with LY341495.</title>
        <authorList>
            <consortium name="Structural genomics consortium (SGC)"/>
        </authorList>
    </citation>
    <scope>X-RAY CRYSTALLOGRAPHY (2.8 ANGSTROMS) OF 37-513</scope>
</reference>
<reference key="11">
    <citation type="journal article" date="2001" name="Schizophr. Res.">
        <title>Polymorphisms in the genes for mGluR types 7 and 8: association studies with schizophrenia.</title>
        <authorList>
            <person name="Bolonna A.A."/>
            <person name="Kerwin R.W."/>
            <person name="Munro J."/>
            <person name="Arranz M.J."/>
            <person name="Makoff A.J."/>
        </authorList>
    </citation>
    <scope>VARIANT PHE-433</scope>
</reference>
<feature type="signal peptide" evidence="4">
    <location>
        <begin position="1"/>
        <end position="34"/>
    </location>
</feature>
<feature type="chain" id="PRO_0000012938" description="Metabotropic glutamate receptor 7">
    <location>
        <begin position="35"/>
        <end position="915"/>
    </location>
</feature>
<feature type="topological domain" description="Extracellular" evidence="4">
    <location>
        <begin position="35"/>
        <end position="590"/>
    </location>
</feature>
<feature type="transmembrane region" description="Helical; Name=1" evidence="4">
    <location>
        <begin position="591"/>
        <end position="615"/>
    </location>
</feature>
<feature type="topological domain" description="Cytoplasmic" evidence="4">
    <location>
        <begin position="616"/>
        <end position="627"/>
    </location>
</feature>
<feature type="transmembrane region" description="Helical; Name=2" evidence="4">
    <location>
        <begin position="628"/>
        <end position="648"/>
    </location>
</feature>
<feature type="topological domain" description="Extracellular" evidence="4">
    <location>
        <begin position="649"/>
        <end position="654"/>
    </location>
</feature>
<feature type="transmembrane region" description="Helical; Name=3" evidence="4">
    <location>
        <begin position="655"/>
        <end position="675"/>
    </location>
</feature>
<feature type="topological domain" description="Cytoplasmic" evidence="4">
    <location>
        <begin position="676"/>
        <end position="702"/>
    </location>
</feature>
<feature type="transmembrane region" description="Helical; Name=4" evidence="4">
    <location>
        <begin position="703"/>
        <end position="723"/>
    </location>
</feature>
<feature type="topological domain" description="Extracellular" evidence="4">
    <location>
        <begin position="724"/>
        <end position="753"/>
    </location>
</feature>
<feature type="transmembrane region" description="Helical; Name=5" evidence="4">
    <location>
        <begin position="754"/>
        <end position="775"/>
    </location>
</feature>
<feature type="topological domain" description="Cytoplasmic" evidence="4">
    <location>
        <begin position="776"/>
        <end position="788"/>
    </location>
</feature>
<feature type="transmembrane region" description="Helical; Name=6" evidence="4">
    <location>
        <begin position="789"/>
        <end position="810"/>
    </location>
</feature>
<feature type="topological domain" description="Extracellular" evidence="4">
    <location>
        <begin position="811"/>
        <end position="825"/>
    </location>
</feature>
<feature type="transmembrane region" description="Helical; Name=7" evidence="4">
    <location>
        <begin position="826"/>
        <end position="850"/>
    </location>
</feature>
<feature type="topological domain" description="Cytoplasmic" evidence="4">
    <location>
        <begin position="851"/>
        <end position="915"/>
    </location>
</feature>
<feature type="region of interest" description="Disordered" evidence="5">
    <location>
        <begin position="874"/>
        <end position="895"/>
    </location>
</feature>
<feature type="compositionally biased region" description="Basic and acidic residues" evidence="5">
    <location>
        <begin position="879"/>
        <end position="892"/>
    </location>
</feature>
<feature type="binding site" evidence="1">
    <location>
        <position position="159"/>
    </location>
    <ligand>
        <name>L-glutamate</name>
        <dbReference type="ChEBI" id="CHEBI:29985"/>
    </ligand>
</feature>
<feature type="binding site" evidence="1">
    <location>
        <begin position="180"/>
        <end position="182"/>
    </location>
    <ligand>
        <name>L-glutamate</name>
        <dbReference type="ChEBI" id="CHEBI:29985"/>
    </ligand>
</feature>
<feature type="binding site" evidence="1">
    <location>
        <position position="230"/>
    </location>
    <ligand>
        <name>L-glutamate</name>
        <dbReference type="ChEBI" id="CHEBI:29985"/>
    </ligand>
</feature>
<feature type="binding site" evidence="1">
    <location>
        <position position="314"/>
    </location>
    <ligand>
        <name>L-glutamate</name>
        <dbReference type="ChEBI" id="CHEBI:29985"/>
    </ligand>
</feature>
<feature type="binding site" evidence="1">
    <location>
        <position position="407"/>
    </location>
    <ligand>
        <name>L-glutamate</name>
        <dbReference type="ChEBI" id="CHEBI:29985"/>
    </ligand>
</feature>
<feature type="modified residue" description="Phosphoserine" evidence="3">
    <location>
        <position position="900"/>
    </location>
</feature>
<feature type="glycosylation site" description="N-linked (GlcNAc...) asparagine" evidence="4">
    <location>
        <position position="98"/>
    </location>
</feature>
<feature type="glycosylation site" description="N-linked (GlcNAc...) asparagine" evidence="4">
    <location>
        <position position="458"/>
    </location>
</feature>
<feature type="glycosylation site" description="N-linked (GlcNAc...) asparagine" evidence="4">
    <location>
        <position position="486"/>
    </location>
</feature>
<feature type="glycosylation site" description="N-linked (GlcNAc...) asparagine" evidence="4">
    <location>
        <position position="572"/>
    </location>
</feature>
<feature type="disulfide bond" evidence="1">
    <location>
        <begin position="67"/>
        <end position="109"/>
    </location>
</feature>
<feature type="disulfide bond" evidence="1">
    <location>
        <begin position="249"/>
        <end position="541"/>
    </location>
</feature>
<feature type="disulfide bond" evidence="1">
    <location>
        <begin position="374"/>
        <end position="390"/>
    </location>
</feature>
<feature type="disulfide bond" evidence="1">
    <location>
        <begin position="430"/>
        <end position="437"/>
    </location>
</feature>
<feature type="disulfide bond" evidence="1">
    <location>
        <begin position="523"/>
        <end position="542"/>
    </location>
</feature>
<feature type="disulfide bond" evidence="1">
    <location>
        <begin position="527"/>
        <end position="545"/>
    </location>
</feature>
<feature type="disulfide bond" evidence="1">
    <location>
        <begin position="548"/>
        <end position="560"/>
    </location>
</feature>
<feature type="disulfide bond" evidence="1">
    <location>
        <begin position="563"/>
        <end position="576"/>
    </location>
</feature>
<feature type="splice variant" id="VSP_015735" description="In isoform 2." evidence="16">
    <original>SPAAKKKYVSYNNLVI</original>
    <variation>NCIPPVRKSVQKSVTWYTIPPTV</variation>
    <location>
        <begin position="900"/>
        <end position="915"/>
    </location>
</feature>
<feature type="splice variant" id="VSP_015732" description="In isoform 3." evidence="15">
    <original>SPAAKKKYVSYNNLVI</original>
    <variation>NFFFWLYSGTW</variation>
    <location>
        <begin position="900"/>
        <end position="915"/>
    </location>
</feature>
<feature type="splice variant" id="VSP_015733" description="In isoform 4." evidence="15">
    <original>SPAAKKKYVSYNNLVI</original>
    <variation>ITSEDLSLHKED</variation>
    <location>
        <begin position="900"/>
        <end position="915"/>
    </location>
</feature>
<feature type="splice variant" id="VSP_015734" description="In isoform 5." evidence="15">
    <original>SPAAKKKYVSYNNLVI</original>
    <variation>SEKCNCY</variation>
    <location>
        <begin position="900"/>
        <end position="915"/>
    </location>
</feature>
<feature type="sequence variant" id="VAR_084620" description="In NEDSHBA; does not rescue axon outgrowth defects when expressed in a heterologous system; decreased protein abundance; increased proteasomal degradation; decreased homodimerization; decreased localization to the cell membrane; dbSNP:rs1114167298." evidence="8 10 11 12">
    <original>I</original>
    <variation>T</variation>
    <location>
        <position position="154"/>
    </location>
</feature>
<feature type="sequence variant" id="VAR_003584" description="In dbSNP:rs2229902." evidence="6">
    <original>Y</original>
    <variation>F</variation>
    <location>
        <position position="433"/>
    </location>
</feature>
<feature type="sequence variant" id="VAR_049276" description="In dbSNP:rs7634846.">
    <original>I</original>
    <variation>V</variation>
    <location>
        <position position="495"/>
    </location>
</feature>
<feature type="sequence variant" id="VAR_084621" description="In NEDSHBA; does not rescue axon outgrowth defects when expressed in a heterologous system." evidence="9 10">
    <location>
        <begin position="586"/>
        <end position="915"/>
    </location>
</feature>
<feature type="sequence variant" id="VAR_084622" description="In NEDSHBA; uncertain significance; dbSNP:rs769709112." evidence="10">
    <original>R</original>
    <variation>Q</variation>
    <location>
        <position position="658"/>
    </location>
</feature>
<feature type="sequence variant" id="VAR_084623" description="In NEDSHBA; uncertain significance; dbSNP:rs1114167300." evidence="8 10 12">
    <original>R</original>
    <variation>W</variation>
    <location>
        <position position="658"/>
    </location>
</feature>
<feature type="sequence variant" id="VAR_084624" description="In NEDSHBA." evidence="10">
    <location>
        <begin position="659"/>
        <end position="915"/>
    </location>
</feature>
<feature type="sequence variant" id="VAR_084625" description="In NEDSHBA; uncertain significance; dbSNP:rs1114167301." evidence="8 10 12">
    <original>T</original>
    <variation>K</variation>
    <location>
        <position position="675"/>
    </location>
</feature>
<feature type="sequence variant" id="VAR_049277" description="In dbSNP:rs1485174.">
    <original>G</original>
    <variation>E</variation>
    <location>
        <position position="745"/>
    </location>
</feature>
<feature type="sequence variant" id="VAR_084626" description="In NEDSHBA; uncertain significance." evidence="9">
    <location>
        <begin position="856"/>
        <end position="915"/>
    </location>
</feature>
<feature type="sequence variant" id="VAR_084627" description="In NEDSHBA; uncertain significance; dbSNP:rs746833089." evidence="10">
    <original>E</original>
    <variation>K</variation>
    <location>
        <position position="891"/>
    </location>
</feature>
<feature type="mutagenesis site" description="Rescues axon outgrowth defects when expressed in a heterologous system. Unchanged protein abundance. Does not affect localization to the plasma membrane. Does not affect N-glycosylation. Does not affect homodimerization." evidence="12">
    <original>R</original>
    <variation>Q</variation>
    <location>
        <position position="622"/>
    </location>
</feature>
<feature type="mutagenesis site" description="Does not rescue axon outgrowth defects when expressed in a heterologous system; when associated with K-675. Decreased protein abundance due to increased proteasomal degradation; when associated with K-675. Loss of localization to the cell membrane; when associated with K-675." evidence="12">
    <original>R</original>
    <variation>W</variation>
    <location>
        <position position="658"/>
    </location>
</feature>
<feature type="mutagenesis site" description="Does not rescue axon outgrowth defects when expressed in a heterologous system; when associated with W-658. Decreased protein abundance due to increased proteasomal degradation; when associated with W-658. Loss of localization to the cell membrane; when associated with W-658." evidence="12">
    <original>T</original>
    <variation>K</variation>
    <location>
        <position position="675"/>
    </location>
</feature>
<feature type="strand" evidence="19">
    <location>
        <begin position="42"/>
        <end position="45"/>
    </location>
</feature>
<feature type="strand" evidence="19">
    <location>
        <begin position="48"/>
        <end position="55"/>
    </location>
</feature>
<feature type="strand" evidence="19">
    <location>
        <begin position="58"/>
        <end position="60"/>
    </location>
</feature>
<feature type="strand" evidence="19">
    <location>
        <begin position="62"/>
        <end position="64"/>
    </location>
</feature>
<feature type="strand" evidence="19">
    <location>
        <begin position="66"/>
        <end position="70"/>
    </location>
</feature>
<feature type="turn" evidence="19">
    <location>
        <begin position="72"/>
        <end position="75"/>
    </location>
</feature>
<feature type="helix" evidence="19">
    <location>
        <begin position="76"/>
        <end position="90"/>
    </location>
</feature>
<feature type="strand" evidence="18">
    <location>
        <begin position="93"/>
        <end position="98"/>
    </location>
</feature>
<feature type="strand" evidence="19">
    <location>
        <begin position="101"/>
        <end position="107"/>
    </location>
</feature>
<feature type="helix" evidence="19">
    <location>
        <begin position="112"/>
        <end position="119"/>
    </location>
</feature>
<feature type="helix" evidence="19">
    <location>
        <begin position="120"/>
        <end position="123"/>
    </location>
</feature>
<feature type="turn" evidence="19">
    <location>
        <begin position="124"/>
        <end position="126"/>
    </location>
</feature>
<feature type="strand" evidence="19">
    <location>
        <begin position="150"/>
        <end position="154"/>
    </location>
</feature>
<feature type="helix" evidence="19">
    <location>
        <begin position="159"/>
        <end position="171"/>
    </location>
</feature>
<feature type="strand" evidence="19">
    <location>
        <begin position="176"/>
        <end position="180"/>
    </location>
</feature>
<feature type="helix" evidence="19">
    <location>
        <begin position="184"/>
        <end position="187"/>
    </location>
</feature>
<feature type="turn" evidence="19">
    <location>
        <begin position="189"/>
        <end position="191"/>
    </location>
</feature>
<feature type="strand" evidence="19">
    <location>
        <begin position="195"/>
        <end position="199"/>
    </location>
</feature>
<feature type="helix" evidence="19">
    <location>
        <begin position="202"/>
        <end position="215"/>
    </location>
</feature>
<feature type="strand" evidence="19">
    <location>
        <begin position="220"/>
        <end position="228"/>
    </location>
</feature>
<feature type="helix" evidence="19">
    <location>
        <begin position="229"/>
        <end position="245"/>
    </location>
</feature>
<feature type="strand" evidence="19">
    <location>
        <begin position="249"/>
        <end position="256"/>
    </location>
</feature>
<feature type="helix" evidence="19">
    <location>
        <begin position="267"/>
        <end position="275"/>
    </location>
</feature>
<feature type="strand" evidence="19">
    <location>
        <begin position="277"/>
        <end position="279"/>
    </location>
</feature>
<feature type="strand" evidence="19">
    <location>
        <begin position="282"/>
        <end position="287"/>
    </location>
</feature>
<feature type="helix" evidence="19">
    <location>
        <begin position="289"/>
        <end position="301"/>
    </location>
</feature>
<feature type="strand" evidence="19">
    <location>
        <begin position="302"/>
        <end position="304"/>
    </location>
</feature>
<feature type="strand" evidence="19">
    <location>
        <begin position="308"/>
        <end position="314"/>
    </location>
</feature>
<feature type="strand" evidence="19">
    <location>
        <begin position="334"/>
        <end position="338"/>
    </location>
</feature>
<feature type="helix" evidence="19">
    <location>
        <begin position="344"/>
        <end position="351"/>
    </location>
</feature>
<feature type="turn" evidence="19">
    <location>
        <begin position="355"/>
        <end position="357"/>
    </location>
</feature>
<feature type="helix" evidence="19">
    <location>
        <begin position="364"/>
        <end position="371"/>
    </location>
</feature>
<feature type="turn" evidence="19">
    <location>
        <begin position="396"/>
        <end position="398"/>
    </location>
</feature>
<feature type="helix" evidence="19">
    <location>
        <begin position="408"/>
        <end position="429"/>
    </location>
</feature>
<feature type="helix" evidence="19">
    <location>
        <begin position="438"/>
        <end position="453"/>
    </location>
</feature>
<feature type="strand" evidence="18">
    <location>
        <begin position="456"/>
        <end position="458"/>
    </location>
</feature>
<feature type="strand" evidence="19">
    <location>
        <begin position="462"/>
        <end position="465"/>
    </location>
</feature>
<feature type="strand" evidence="19">
    <location>
        <begin position="477"/>
        <end position="483"/>
    </location>
</feature>
<feature type="strand" evidence="19">
    <location>
        <begin position="491"/>
        <end position="504"/>
    </location>
</feature>
<feature type="helix" evidence="19">
    <location>
        <begin position="506"/>
        <end position="508"/>
    </location>
</feature>
<comment type="function">
    <text evidence="12 14">G-protein coupled receptor activated by glutamate that regulates axon outgrowth through the MAPK-cAMP-PKA signaling pathway during neuronal development (PubMed:33500274). Ligand binding causes a conformation change that triggers signaling via guanine nucleotide-binding proteins (G proteins) and modulates the activity of downstream effectors, such as adenylate cyclase that it inhibits (PubMed:9473604).</text>
</comment>
<comment type="subunit">
    <text evidence="2 11 12">Homodimer (PubMed:33476302, PubMed:33500274). Interacts with PICK1.</text>
</comment>
<comment type="subcellular location">
    <subcellularLocation>
        <location evidence="12">Cell membrane</location>
        <topology evidence="4">Multi-pass membrane protein</topology>
    </subcellularLocation>
</comment>
<comment type="alternative products">
    <event type="alternative splicing"/>
    <isoform>
        <id>Q14831-1</id>
        <name>1</name>
        <name>GRM7_v1</name>
        <name>mGluR7a</name>
        <sequence type="displayed"/>
    </isoform>
    <isoform>
        <id>Q14831-2</id>
        <name>2</name>
        <name>GRM7_v2</name>
        <name>mGluR7b</name>
        <sequence type="described" ref="VSP_015735"/>
    </isoform>
    <isoform>
        <id>Q14831-3</id>
        <name>3</name>
        <name>GRM7_v3</name>
        <sequence type="described" ref="VSP_015732"/>
    </isoform>
    <isoform>
        <id>Q14831-4</id>
        <name>4</name>
        <name>GRM7_v4</name>
        <sequence type="described" ref="VSP_015733"/>
    </isoform>
    <isoform>
        <id>Q14831-5</id>
        <name>5</name>
        <name>GRM7_v5</name>
        <sequence type="described" ref="VSP_015734"/>
    </isoform>
</comment>
<comment type="tissue specificity">
    <text evidence="7 13">Expressed in many areas of the brain, especially in the cerebral cortex, hippocampus, and cerebellum. Expression of GRM7 isoforms in non-neuronal tissues appears to be restricted to isoform 3 and isoform 4.</text>
</comment>
<comment type="PTM">
    <text evidence="12">N-glycosylated.</text>
</comment>
<comment type="disease" evidence="8 9 10 11 12">
    <disease id="DI-05868">
        <name>Neurodevelopmental disorder with seizures, hypotonia, and brain imaging abnormalities</name>
        <acronym>NEDSHBA</acronym>
        <description>An autosomal recessive neurodevelopmental disorder characterized by global developmental delay, hypotonia, severe to profound intellectual disability, early-onset epilepsy, and microcephaly. Neuroimaging shows cerebral atrophy, thin corpus callosum and hypomyelination in a majority of cases. Death in childhood may occur.</description>
        <dbReference type="MIM" id="618922"/>
    </disease>
    <text>The disease is caused by variants affecting the gene represented in this entry.</text>
</comment>
<comment type="miscellaneous">
    <molecule>Isoform 3</molecule>
    <text evidence="17">May be produced at very low levels due to a premature stop codon in the mRNA, leading to nonsense-mediated mRNA decay.</text>
</comment>
<comment type="miscellaneous">
    <molecule>Isoform 4</molecule>
    <text evidence="17">May be produced at very low levels due to a premature stop codon in the mRNA, leading to nonsense-mediated mRNA decay.</text>
</comment>
<comment type="similarity">
    <text evidence="17">Belongs to the G-protein coupled receptor 3 family.</text>
</comment>
<comment type="sequence caution" evidence="17">
    <molecule>Isoform 3</molecule>
    <conflict type="frameshift">
        <sequence resource="EMBL-CDS" id="AAM47557"/>
    </conflict>
</comment>
<evidence type="ECO:0000250" key="1"/>
<evidence type="ECO:0000250" key="2">
    <source>
        <dbReference type="UniProtKB" id="P35400"/>
    </source>
</evidence>
<evidence type="ECO:0000250" key="3">
    <source>
        <dbReference type="UniProtKB" id="Q68ED2"/>
    </source>
</evidence>
<evidence type="ECO:0000255" key="4"/>
<evidence type="ECO:0000256" key="5">
    <source>
        <dbReference type="SAM" id="MobiDB-lite"/>
    </source>
</evidence>
<evidence type="ECO:0000269" key="6">
    <source>
    </source>
</evidence>
<evidence type="ECO:0000269" key="7">
    <source>
    </source>
</evidence>
<evidence type="ECO:0000269" key="8">
    <source>
    </source>
</evidence>
<evidence type="ECO:0000269" key="9">
    <source>
    </source>
</evidence>
<evidence type="ECO:0000269" key="10">
    <source>
    </source>
</evidence>
<evidence type="ECO:0000269" key="11">
    <source>
    </source>
</evidence>
<evidence type="ECO:0000269" key="12">
    <source>
    </source>
</evidence>
<evidence type="ECO:0000269" key="13">
    <source>
    </source>
</evidence>
<evidence type="ECO:0000269" key="14">
    <source>
    </source>
</evidence>
<evidence type="ECO:0000303" key="15">
    <source>
    </source>
</evidence>
<evidence type="ECO:0000303" key="16">
    <source>
    </source>
</evidence>
<evidence type="ECO:0000305" key="17"/>
<evidence type="ECO:0007829" key="18">
    <source>
        <dbReference type="PDB" id="3MQ4"/>
    </source>
</evidence>
<evidence type="ECO:0007829" key="19">
    <source>
        <dbReference type="PDB" id="5C5C"/>
    </source>
</evidence>
<proteinExistence type="evidence at protein level"/>
<sequence length="915" mass="102251">MVQLRKLLRVLTLMKFPCCVLEVLLCALAAAARGQEMYAPHSIRIEGDVTLGGLFPVHAKGPSGVPCGDIKRENGIHRLEAMLYALDQINSDPNLLPNVTLGARILDTCSRDTYALEQSLTFVQALIQKDTSDVRCTNGEPPVFVKPEKVVGVIGASGSSVSIMVANILRLFQIPQISYASTAPELSDDRRYDFFSRVVPPDSFQAQAMVDIVKALGWNYVSTLASEGSYGEKGVESFTQISKEAGGLCIAQSVRIPQERKDRTIDFDRIIKQLLDTPNSRAVVIFANDEDIKQILAAAKRADQVGHFLWVGSDSWGSKINPLHQHEDIAEGAITIQPKRATVEGFDAYFTSRTLENNRRNVWFAEYWEENFNCKLTISGSKKEDTDRKCTGQERIGKDSNYEQEGKVQFVIDAVYAMAHALHHMNKDLCADYRGVCPEMEQAGGKKLLKYIRNVNFNGSAGTPVMFNKNGDAPGRYDIFQYQTTNTSNPGYRLIGQWTDELQLNIEDMQWGKGVREIPASVCTLPCKPGQRKKTQKGTPCCWTCEPCDGYQYQFDEMTCQHCPYDQRPNENRTGCQDIPIIKLEWHSPWAVIPVFLAMLGIIATIFVMATFIRYNDTPIVRASGRELSYVLLTGIFLCYIITFLMIAKPDVAVCSFRRVFLGLGMCISYAALLTKTNRIYRIFEQGKKSVTAPRLISPTSQLAITSSLISVQLLGVFIWFGVDPPNIIIDYDEHKTMNPEQARGVLKCDITDLQIICSLGYSILLMVTCTVYAIKTRGVPENFNEAKPIGFTMYTTCIVWLAFIPIFFGTAQSAEKLYIQTTTLTISMNLSASVALGMLYMPKVYIIIFHPELNVQKRKRSFKAVVTAATMSSRLSHKPSDRPNGEAKTELCENVDPNSPAAKKKYVSYNNLVI</sequence>
<protein>
    <recommendedName>
        <fullName>Metabotropic glutamate receptor 7</fullName>
        <shortName>mGluR7</shortName>
    </recommendedName>
</protein>